<gene>
    <name type="primary">NSUN7</name>
    <name type="ORF">QnpA-16118</name>
    <name type="ORF">QtsA-12871</name>
    <name type="ORF">QtsA-14680</name>
    <name type="ORF">QtsA-19789</name>
</gene>
<organism>
    <name type="scientific">Macaca fascicularis</name>
    <name type="common">Crab-eating macaque</name>
    <name type="synonym">Cynomolgus monkey</name>
    <dbReference type="NCBI Taxonomy" id="9541"/>
    <lineage>
        <taxon>Eukaryota</taxon>
        <taxon>Metazoa</taxon>
        <taxon>Chordata</taxon>
        <taxon>Craniata</taxon>
        <taxon>Vertebrata</taxon>
        <taxon>Euteleostomi</taxon>
        <taxon>Mammalia</taxon>
        <taxon>Eutheria</taxon>
        <taxon>Euarchontoglires</taxon>
        <taxon>Primates</taxon>
        <taxon>Haplorrhini</taxon>
        <taxon>Catarrhini</taxon>
        <taxon>Cercopithecidae</taxon>
        <taxon>Cercopithecinae</taxon>
        <taxon>Macaca</taxon>
    </lineage>
</organism>
<protein>
    <recommendedName>
        <fullName>Putative methyltransferase NSUN7</fullName>
        <ecNumber>2.1.1.-</ecNumber>
    </recommendedName>
    <alternativeName>
        <fullName>NOL1/NOP2/Sun domain family member 7</fullName>
    </alternativeName>
</protein>
<dbReference type="EC" id="2.1.1.-"/>
<dbReference type="EMBL" id="AB047909">
    <property type="protein sequence ID" value="BAB12330.1"/>
    <property type="molecule type" value="mRNA"/>
</dbReference>
<dbReference type="EMBL" id="AB168540">
    <property type="protein sequence ID" value="BAE00655.1"/>
    <property type="molecule type" value="mRNA"/>
</dbReference>
<dbReference type="EMBL" id="AB168764">
    <property type="protein sequence ID" value="BAE00871.1"/>
    <property type="molecule type" value="mRNA"/>
</dbReference>
<dbReference type="EMBL" id="AB071129">
    <property type="protein sequence ID" value="BAB64523.1"/>
    <property type="status" value="ALT_SEQ"/>
    <property type="molecule type" value="mRNA"/>
</dbReference>
<dbReference type="SMR" id="Q4R7Q1"/>
<dbReference type="STRING" id="9541.ENSMFAP00000008765"/>
<dbReference type="Proteomes" id="UP000233100">
    <property type="component" value="Unplaced"/>
</dbReference>
<dbReference type="GO" id="GO:0008168">
    <property type="term" value="F:methyltransferase activity"/>
    <property type="evidence" value="ECO:0007669"/>
    <property type="project" value="UniProtKB-KW"/>
</dbReference>
<dbReference type="GO" id="GO:0003723">
    <property type="term" value="F:RNA binding"/>
    <property type="evidence" value="ECO:0007669"/>
    <property type="project" value="UniProtKB-KW"/>
</dbReference>
<dbReference type="GO" id="GO:0001510">
    <property type="term" value="P:RNA methylation"/>
    <property type="evidence" value="ECO:0007669"/>
    <property type="project" value="UniProtKB-ARBA"/>
</dbReference>
<dbReference type="Gene3D" id="3.30.70.1170">
    <property type="entry name" value="Sun protein, domain 3"/>
    <property type="match status" value="1"/>
</dbReference>
<dbReference type="Gene3D" id="3.40.50.150">
    <property type="entry name" value="Vaccinia Virus protein VP39"/>
    <property type="match status" value="1"/>
</dbReference>
<dbReference type="InterPro" id="IPR049560">
    <property type="entry name" value="MeTrfase_RsmB-F_NOP2_cat"/>
</dbReference>
<dbReference type="InterPro" id="IPR001678">
    <property type="entry name" value="MeTrfase_RsmB-F_NOP2_dom"/>
</dbReference>
<dbReference type="InterPro" id="IPR049561">
    <property type="entry name" value="NSUN5_7_fdxn-like"/>
</dbReference>
<dbReference type="InterPro" id="IPR042620">
    <property type="entry name" value="NSUN7"/>
</dbReference>
<dbReference type="InterPro" id="IPR029063">
    <property type="entry name" value="SAM-dependent_MTases_sf"/>
</dbReference>
<dbReference type="PANTHER" id="PTHR14663">
    <property type="entry name" value="METHYLTRANSFERASE NSUN7-RELATED"/>
    <property type="match status" value="1"/>
</dbReference>
<dbReference type="PANTHER" id="PTHR14663:SF2">
    <property type="entry name" value="METHYLTRANSFERASE NSUN7-RELATED"/>
    <property type="match status" value="1"/>
</dbReference>
<dbReference type="Pfam" id="PF01189">
    <property type="entry name" value="Methyltr_RsmB-F"/>
    <property type="match status" value="1"/>
</dbReference>
<dbReference type="Pfam" id="PF21148">
    <property type="entry name" value="NSUN5_fdxn-like"/>
    <property type="match status" value="1"/>
</dbReference>
<dbReference type="SUPFAM" id="SSF53335">
    <property type="entry name" value="S-adenosyl-L-methionine-dependent methyltransferases"/>
    <property type="match status" value="1"/>
</dbReference>
<dbReference type="PROSITE" id="PS51686">
    <property type="entry name" value="SAM_MT_RSMB_NOP"/>
    <property type="match status" value="1"/>
</dbReference>
<accession>Q4R7Q1</accession>
<accession>Q4R8B7</accession>
<accession>Q95LR3</accession>
<accession>Q9GMM6</accession>
<reference key="1">
    <citation type="journal article" date="2001" name="Gene">
        <title>Assignment of 118 novel cDNAs of cynomolgus monkey brain to human chromosomes.</title>
        <authorList>
            <person name="Osada N."/>
            <person name="Hida M."/>
            <person name="Kususda J."/>
            <person name="Tanuma R."/>
            <person name="Iseki K."/>
            <person name="Hirata M."/>
            <person name="Suto Y."/>
            <person name="Hirai M."/>
            <person name="Terao K."/>
            <person name="Suzuki Y."/>
            <person name="Sugano S."/>
            <person name="Hashimoto K."/>
        </authorList>
    </citation>
    <scope>NUCLEOTIDE SEQUENCE [LARGE SCALE MRNA] (ISOFORM 3)</scope>
    <source>
        <tissue>Parietal cortex</tissue>
    </source>
</reference>
<reference key="2">
    <citation type="journal article" date="2001" name="Gene">
        <authorList>
            <person name="Osada N."/>
            <person name="Hida M."/>
            <person name="Kusuda J."/>
            <person name="Tanuma R."/>
            <person name="Iseki K."/>
            <person name="Hirata M."/>
            <person name="Suto Y."/>
            <person name="Hirai M."/>
            <person name="Terao K."/>
            <person name="Suzuki Y."/>
            <person name="Sugano S."/>
            <person name="Hashimoto K."/>
            <person name="Kususda J."/>
        </authorList>
    </citation>
    <scope>ERRATUM OF PUBMED:11574149</scope>
</reference>
<reference key="3">
    <citation type="submission" date="2005-06" db="EMBL/GenBank/DDBJ databases">
        <title>DNA sequences of macaque genes expressed in brain or testis and its evolutionary implications.</title>
        <authorList>
            <consortium name="International consortium for macaque cDNA sequencing and analysis"/>
        </authorList>
    </citation>
    <scope>NUCLEOTIDE SEQUENCE [LARGE SCALE MRNA] (ISOFORMS 1 AND 2)</scope>
    <source>
        <tissue>Testis</tissue>
    </source>
</reference>
<reference key="4">
    <citation type="journal article" date="2002" name="BMC Genomics">
        <title>Cynomolgus monkey testicular cDNAs for discovery of novel human genes in the human genome sequence.</title>
        <authorList>
            <person name="Osada N."/>
            <person name="Hida M."/>
            <person name="Kusuda J."/>
            <person name="Tanuma R."/>
            <person name="Hirata M."/>
            <person name="Suto Y."/>
            <person name="Hirai M."/>
            <person name="Terao K."/>
            <person name="Sugano S."/>
            <person name="Hashimoto K."/>
        </authorList>
    </citation>
    <scope>NUCLEOTIDE SEQUENCE [LARGE SCALE MRNA] OF 378-702</scope>
    <source>
        <tissue>Testis</tissue>
    </source>
</reference>
<comment type="function">
    <text evidence="5">May have S-adenosyl-L-methionine-dependent methyl-transferase activity.</text>
</comment>
<comment type="alternative products">
    <event type="alternative splicing"/>
    <isoform>
        <id>Q4R7Q1-1</id>
        <name>1</name>
        <sequence type="displayed"/>
    </isoform>
    <isoform>
        <id>Q4R7Q1-2</id>
        <name>2</name>
        <sequence type="described" ref="VSP_025981"/>
    </isoform>
    <isoform>
        <id>Q4R7Q1-3</id>
        <name>3</name>
        <sequence type="described" ref="VSP_025980"/>
    </isoform>
</comment>
<comment type="similarity">
    <text evidence="1">Belongs to the class I-like SAM-binding methyltransferase superfamily. RsmB/NOP family.</text>
</comment>
<comment type="sequence caution" evidence="5">
    <conflict type="erroneous termination">
        <sequence resource="EMBL-CDS" id="BAB64523"/>
    </conflict>
    <text>Truncated C-terminus.</text>
</comment>
<sequence length="702" mass="79246">MLNSTGELEFSNEEDAEIISQLTSLALSDGKSSAGAPEKTGYPDSVYVMAANIFQGIRIEKSAQKVLIKYGNEPLRSFSESEDQSFQRLSYELAFSALKYQDILETILIDSCIFPSTTIPDRKFQTRVLSDNEESISEVQEVENLLNSFKIKLAAALARCRIKHDALSIYHILPETVRKQELRASTLPLYAWINTCKISPEEVYNNLKRRGYNKVKSVLHIDDKVFAVDQHCYDVLIFPSHLKNDLINIDLFKDYKLIFQDKSRSLAVHSVKALLNMDDDILMVNTGSWYTVAHMSILTNNNTSKVFVCGVQSQAKDPDLKTLFTKMGCKNIEILRETFINIESKDHRLQKVKVILPLPRCSGLGVSNPVEFILNEHEDTEFLKDHSQGGISVDKLHILAQQQYEQLTHAMKFTKAQAVVYCTCSVCPEENEAVVKKALEFQDLGNKVQLYRLSPPVLPLCSLKEIQLSTDKFFRMEPSEITNGCFLSILTRERDPSETVSVKDVLARAAAKGLLDGIELGKSSKREKKKKKSKTSLTKAATTDNGIQMKIAEFLNRETKASANLSETVTKPSLPQKNTAQVGASSQTRKHKLAPHPAVPTFMKNTCPSRPRERQTHFIRPRPEDRMVALKPIEIVLPPVFMPFSSPQGIRSRMPTQHLYCHWVAPKPLVPTCLPTPSLSRKGEKPKDDTRSSLLRPPRRWL</sequence>
<keyword id="KW-0025">Alternative splicing</keyword>
<keyword id="KW-0489">Methyltransferase</keyword>
<keyword id="KW-1185">Reference proteome</keyword>
<keyword id="KW-0694">RNA-binding</keyword>
<keyword id="KW-0949">S-adenosyl-L-methionine</keyword>
<keyword id="KW-0808">Transferase</keyword>
<evidence type="ECO:0000255" key="1">
    <source>
        <dbReference type="PROSITE-ProRule" id="PRU01023"/>
    </source>
</evidence>
<evidence type="ECO:0000256" key="2">
    <source>
        <dbReference type="SAM" id="MobiDB-lite"/>
    </source>
</evidence>
<evidence type="ECO:0000303" key="3">
    <source>
    </source>
</evidence>
<evidence type="ECO:0000303" key="4">
    <source ref="3"/>
</evidence>
<evidence type="ECO:0000305" key="5"/>
<feature type="chain" id="PRO_0000289239" description="Putative methyltransferase NSUN7">
    <location>
        <begin position="1"/>
        <end position="702"/>
    </location>
</feature>
<feature type="region of interest" description="Disordered" evidence="2">
    <location>
        <begin position="522"/>
        <end position="541"/>
    </location>
</feature>
<feature type="region of interest" description="Disordered" evidence="2">
    <location>
        <begin position="567"/>
        <end position="593"/>
    </location>
</feature>
<feature type="region of interest" description="Disordered" evidence="2">
    <location>
        <begin position="675"/>
        <end position="702"/>
    </location>
</feature>
<feature type="compositionally biased region" description="Basic residues" evidence="2">
    <location>
        <begin position="523"/>
        <end position="534"/>
    </location>
</feature>
<feature type="compositionally biased region" description="Polar residues" evidence="2">
    <location>
        <begin position="567"/>
        <end position="587"/>
    </location>
</feature>
<feature type="compositionally biased region" description="Basic and acidic residues" evidence="2">
    <location>
        <begin position="681"/>
        <end position="691"/>
    </location>
</feature>
<feature type="active site" description="Nucleophile" evidence="1">
    <location>
        <position position="424"/>
    </location>
</feature>
<feature type="splice variant" id="VSP_025980" description="In isoform 3." evidence="3">
    <location>
        <begin position="1"/>
        <end position="548"/>
    </location>
</feature>
<feature type="splice variant" id="VSP_025981" description="In isoform 2." evidence="4">
    <location>
        <begin position="1"/>
        <end position="276"/>
    </location>
</feature>
<feature type="sequence conflict" description="In Ref. 1; BAE00655." evidence="5" ref="1">
    <original>P</original>
    <variation>L</variation>
    <location>
        <position position="357"/>
    </location>
</feature>
<proteinExistence type="evidence at transcript level"/>
<name>NSUN7_MACFA</name>